<evidence type="ECO:0000255" key="1">
    <source>
        <dbReference type="HAMAP-Rule" id="MF_00634"/>
    </source>
</evidence>
<sequence length="74" mass="7938">MGKKHVIVKPNARQASVSITPAGQLLVTVRAPASDGQANQELIALLAAYFGVPKSRIQLVKGHTSRHKVIELLD</sequence>
<feature type="chain" id="PRO_0000139458" description="UPF0235 protein tsr1994">
    <location>
        <begin position="1"/>
        <end position="74"/>
    </location>
</feature>
<accession>Q8DHG5</accession>
<organism>
    <name type="scientific">Thermosynechococcus vestitus (strain NIES-2133 / IAM M-273 / BP-1)</name>
    <dbReference type="NCBI Taxonomy" id="197221"/>
    <lineage>
        <taxon>Bacteria</taxon>
        <taxon>Bacillati</taxon>
        <taxon>Cyanobacteriota</taxon>
        <taxon>Cyanophyceae</taxon>
        <taxon>Acaryochloridales</taxon>
        <taxon>Thermosynechococcaceae</taxon>
        <taxon>Thermosynechococcus</taxon>
    </lineage>
</organism>
<dbReference type="EMBL" id="BA000039">
    <property type="protein sequence ID" value="BAC09546.1"/>
    <property type="molecule type" value="Genomic_DNA"/>
</dbReference>
<dbReference type="RefSeq" id="NP_682784.1">
    <property type="nucleotide sequence ID" value="NC_004113.1"/>
</dbReference>
<dbReference type="RefSeq" id="WP_011057829.1">
    <property type="nucleotide sequence ID" value="NC_004113.1"/>
</dbReference>
<dbReference type="SMR" id="Q8DHG5"/>
<dbReference type="STRING" id="197221.gene:10748602"/>
<dbReference type="EnsemblBacteria" id="BAC09546">
    <property type="protein sequence ID" value="BAC09546"/>
    <property type="gene ID" value="BAC09546"/>
</dbReference>
<dbReference type="KEGG" id="tel:tsr1994"/>
<dbReference type="eggNOG" id="COG1872">
    <property type="taxonomic scope" value="Bacteria"/>
</dbReference>
<dbReference type="Proteomes" id="UP000000440">
    <property type="component" value="Chromosome"/>
</dbReference>
<dbReference type="GO" id="GO:0005737">
    <property type="term" value="C:cytoplasm"/>
    <property type="evidence" value="ECO:0007669"/>
    <property type="project" value="TreeGrafter"/>
</dbReference>
<dbReference type="Gene3D" id="3.30.1200.10">
    <property type="entry name" value="YggU-like"/>
    <property type="match status" value="1"/>
</dbReference>
<dbReference type="HAMAP" id="MF_00634">
    <property type="entry name" value="UPF0235"/>
    <property type="match status" value="1"/>
</dbReference>
<dbReference type="InterPro" id="IPR003746">
    <property type="entry name" value="DUF167"/>
</dbReference>
<dbReference type="InterPro" id="IPR036591">
    <property type="entry name" value="YggU-like_sf"/>
</dbReference>
<dbReference type="NCBIfam" id="TIGR00251">
    <property type="entry name" value="DUF167 family protein"/>
    <property type="match status" value="1"/>
</dbReference>
<dbReference type="PANTHER" id="PTHR13420">
    <property type="entry name" value="UPF0235 PROTEIN C15ORF40"/>
    <property type="match status" value="1"/>
</dbReference>
<dbReference type="PANTHER" id="PTHR13420:SF7">
    <property type="entry name" value="UPF0235 PROTEIN C15ORF40"/>
    <property type="match status" value="1"/>
</dbReference>
<dbReference type="Pfam" id="PF02594">
    <property type="entry name" value="DUF167"/>
    <property type="match status" value="1"/>
</dbReference>
<dbReference type="SMART" id="SM01152">
    <property type="entry name" value="DUF167"/>
    <property type="match status" value="1"/>
</dbReference>
<dbReference type="SUPFAM" id="SSF69786">
    <property type="entry name" value="YggU-like"/>
    <property type="match status" value="1"/>
</dbReference>
<proteinExistence type="inferred from homology"/>
<keyword id="KW-1185">Reference proteome</keyword>
<reference key="1">
    <citation type="journal article" date="2002" name="DNA Res.">
        <title>Complete genome structure of the thermophilic cyanobacterium Thermosynechococcus elongatus BP-1.</title>
        <authorList>
            <person name="Nakamura Y."/>
            <person name="Kaneko T."/>
            <person name="Sato S."/>
            <person name="Ikeuchi M."/>
            <person name="Katoh H."/>
            <person name="Sasamoto S."/>
            <person name="Watanabe A."/>
            <person name="Iriguchi M."/>
            <person name="Kawashima K."/>
            <person name="Kimura T."/>
            <person name="Kishida Y."/>
            <person name="Kiyokawa C."/>
            <person name="Kohara M."/>
            <person name="Matsumoto M."/>
            <person name="Matsuno A."/>
            <person name="Nakazaki N."/>
            <person name="Shimpo S."/>
            <person name="Sugimoto M."/>
            <person name="Takeuchi C."/>
            <person name="Yamada M."/>
            <person name="Tabata S."/>
        </authorList>
    </citation>
    <scope>NUCLEOTIDE SEQUENCE [LARGE SCALE GENOMIC DNA]</scope>
    <source>
        <strain>NIES-2133 / IAM M-273 / BP-1</strain>
    </source>
</reference>
<protein>
    <recommendedName>
        <fullName evidence="1">UPF0235 protein tsr1994</fullName>
    </recommendedName>
</protein>
<comment type="similarity">
    <text evidence="1">Belongs to the UPF0235 family.</text>
</comment>
<gene>
    <name type="ordered locus">tsr1994</name>
</gene>
<name>Y1994_THEVB</name>